<protein>
    <recommendedName>
        <fullName>Phosphoglucosamine mutase</fullName>
        <ecNumber>5.4.2.10</ecNumber>
    </recommendedName>
</protein>
<keyword id="KW-0413">Isomerase</keyword>
<keyword id="KW-0460">Magnesium</keyword>
<keyword id="KW-0479">Metal-binding</keyword>
<keyword id="KW-0597">Phosphoprotein</keyword>
<keyword id="KW-1185">Reference proteome</keyword>
<proteinExistence type="evidence at protein level"/>
<dbReference type="EC" id="5.4.2.10"/>
<dbReference type="EMBL" id="EU430076">
    <property type="protein sequence ID" value="ABZ91903.1"/>
    <property type="molecule type" value="Genomic_DNA"/>
</dbReference>
<dbReference type="EMBL" id="L77117">
    <property type="protein sequence ID" value="AAB99103.1"/>
    <property type="molecule type" value="Genomic_DNA"/>
</dbReference>
<dbReference type="PIR" id="C64437">
    <property type="entry name" value="C64437"/>
</dbReference>
<dbReference type="RefSeq" id="WP_010870612.1">
    <property type="nucleotide sequence ID" value="NC_000909.1"/>
</dbReference>
<dbReference type="SMR" id="Q58500"/>
<dbReference type="FunCoup" id="Q58500">
    <property type="interactions" value="108"/>
</dbReference>
<dbReference type="STRING" id="243232.MJ_1100"/>
<dbReference type="PaxDb" id="243232-MJ_1100"/>
<dbReference type="EnsemblBacteria" id="AAB99103">
    <property type="protein sequence ID" value="AAB99103"/>
    <property type="gene ID" value="MJ_1100"/>
</dbReference>
<dbReference type="GeneID" id="1451997"/>
<dbReference type="KEGG" id="mja:MJ_1100"/>
<dbReference type="eggNOG" id="arCOG00767">
    <property type="taxonomic scope" value="Archaea"/>
</dbReference>
<dbReference type="HOGENOM" id="CLU_016950_7_1_2"/>
<dbReference type="InParanoid" id="Q58500"/>
<dbReference type="OrthoDB" id="10363at2157"/>
<dbReference type="PhylomeDB" id="Q58500"/>
<dbReference type="Proteomes" id="UP000000805">
    <property type="component" value="Chromosome"/>
</dbReference>
<dbReference type="GO" id="GO:0000287">
    <property type="term" value="F:magnesium ion binding"/>
    <property type="evidence" value="ECO:0007669"/>
    <property type="project" value="UniProtKB-UniRule"/>
</dbReference>
<dbReference type="GO" id="GO:0008966">
    <property type="term" value="F:phosphoglucosamine mutase activity"/>
    <property type="evidence" value="ECO:0007669"/>
    <property type="project" value="UniProtKB-UniRule"/>
</dbReference>
<dbReference type="GO" id="GO:0004615">
    <property type="term" value="F:phosphomannomutase activity"/>
    <property type="evidence" value="ECO:0000318"/>
    <property type="project" value="GO_Central"/>
</dbReference>
<dbReference type="GO" id="GO:0005975">
    <property type="term" value="P:carbohydrate metabolic process"/>
    <property type="evidence" value="ECO:0007669"/>
    <property type="project" value="InterPro"/>
</dbReference>
<dbReference type="CDD" id="cd03087">
    <property type="entry name" value="PGM_like1"/>
    <property type="match status" value="1"/>
</dbReference>
<dbReference type="FunFam" id="3.40.120.10:FF:000001">
    <property type="entry name" value="Phosphoglucosamine mutase"/>
    <property type="match status" value="1"/>
</dbReference>
<dbReference type="FunFam" id="3.40.120.10:FF:000003">
    <property type="entry name" value="Phosphoglucosamine mutase"/>
    <property type="match status" value="1"/>
</dbReference>
<dbReference type="FunFam" id="3.30.310.50:FF:000009">
    <property type="entry name" value="Probable phosphoglucosamine mutase"/>
    <property type="match status" value="1"/>
</dbReference>
<dbReference type="Gene3D" id="3.40.120.10">
    <property type="entry name" value="Alpha-D-Glucose-1,6-Bisphosphate, subunit A, domain 3"/>
    <property type="match status" value="3"/>
</dbReference>
<dbReference type="Gene3D" id="3.30.310.50">
    <property type="entry name" value="Alpha-D-phosphohexomutase, C-terminal domain"/>
    <property type="match status" value="1"/>
</dbReference>
<dbReference type="HAMAP" id="MF_01554_A">
    <property type="entry name" value="GlmM_A"/>
    <property type="match status" value="1"/>
</dbReference>
<dbReference type="InterPro" id="IPR005844">
    <property type="entry name" value="A-D-PHexomutase_a/b/a-I"/>
</dbReference>
<dbReference type="InterPro" id="IPR016055">
    <property type="entry name" value="A-D-PHexomutase_a/b/a-I/II/III"/>
</dbReference>
<dbReference type="InterPro" id="IPR005845">
    <property type="entry name" value="A-D-PHexomutase_a/b/a-II"/>
</dbReference>
<dbReference type="InterPro" id="IPR005846">
    <property type="entry name" value="A-D-PHexomutase_a/b/a-III"/>
</dbReference>
<dbReference type="InterPro" id="IPR005843">
    <property type="entry name" value="A-D-PHexomutase_C"/>
</dbReference>
<dbReference type="InterPro" id="IPR036900">
    <property type="entry name" value="A-D-PHexomutase_C_sf"/>
</dbReference>
<dbReference type="InterPro" id="IPR016066">
    <property type="entry name" value="A-D-PHexomutase_CS"/>
</dbReference>
<dbReference type="InterPro" id="IPR005841">
    <property type="entry name" value="Alpha-D-phosphohexomutase_SF"/>
</dbReference>
<dbReference type="InterPro" id="IPR023666">
    <property type="entry name" value="GlmM_arc"/>
</dbReference>
<dbReference type="InterPro" id="IPR024086">
    <property type="entry name" value="GlmM_arc-type"/>
</dbReference>
<dbReference type="NCBIfam" id="TIGR03990">
    <property type="entry name" value="Arch_GlmM"/>
    <property type="match status" value="1"/>
</dbReference>
<dbReference type="PANTHER" id="PTHR43771">
    <property type="entry name" value="PHOSPHOMANNOMUTASE"/>
    <property type="match status" value="1"/>
</dbReference>
<dbReference type="PANTHER" id="PTHR43771:SF1">
    <property type="entry name" value="PHOSPHOMANNOMUTASE"/>
    <property type="match status" value="1"/>
</dbReference>
<dbReference type="Pfam" id="PF02878">
    <property type="entry name" value="PGM_PMM_I"/>
    <property type="match status" value="1"/>
</dbReference>
<dbReference type="Pfam" id="PF02879">
    <property type="entry name" value="PGM_PMM_II"/>
    <property type="match status" value="1"/>
</dbReference>
<dbReference type="Pfam" id="PF02880">
    <property type="entry name" value="PGM_PMM_III"/>
    <property type="match status" value="1"/>
</dbReference>
<dbReference type="Pfam" id="PF00408">
    <property type="entry name" value="PGM_PMM_IV"/>
    <property type="match status" value="1"/>
</dbReference>
<dbReference type="PRINTS" id="PR00509">
    <property type="entry name" value="PGMPMM"/>
</dbReference>
<dbReference type="SUPFAM" id="SSF55957">
    <property type="entry name" value="Phosphoglucomutase, C-terminal domain"/>
    <property type="match status" value="1"/>
</dbReference>
<dbReference type="SUPFAM" id="SSF53738">
    <property type="entry name" value="Phosphoglucomutase, first 3 domains"/>
    <property type="match status" value="3"/>
</dbReference>
<dbReference type="PROSITE" id="PS00710">
    <property type="entry name" value="PGM_PMM"/>
    <property type="match status" value="1"/>
</dbReference>
<accession>Q58500</accession>
<accession>B1A8K6</accession>
<gene>
    <name type="primary">glmM</name>
    <name type="ordered locus">MJ1100</name>
</gene>
<organism>
    <name type="scientific">Methanocaldococcus jannaschii (strain ATCC 43067 / DSM 2661 / JAL-1 / JCM 10045 / NBRC 100440)</name>
    <name type="common">Methanococcus jannaschii</name>
    <dbReference type="NCBI Taxonomy" id="243232"/>
    <lineage>
        <taxon>Archaea</taxon>
        <taxon>Methanobacteriati</taxon>
        <taxon>Methanobacteriota</taxon>
        <taxon>Methanomada group</taxon>
        <taxon>Methanococci</taxon>
        <taxon>Methanococcales</taxon>
        <taxon>Methanocaldococcaceae</taxon>
        <taxon>Methanocaldococcus</taxon>
    </lineage>
</organism>
<evidence type="ECO:0000250" key="1"/>
<evidence type="ECO:0000269" key="2">
    <source>
    </source>
</evidence>
<evidence type="ECO:0000305" key="3"/>
<reference key="1">
    <citation type="journal article" date="2008" name="J. Bacteriol.">
        <title>Acetamido sugar biosynthesis in the Euryarchaea.</title>
        <authorList>
            <person name="Namboori S.C."/>
            <person name="Graham D.E."/>
        </authorList>
    </citation>
    <scope>NUCLEOTIDE SEQUENCE [GENOMIC DNA]</scope>
    <scope>SUBUNIT</scope>
    <source>
        <strain>ATCC 43067 / DSM 2661 / JAL-1 / JCM 10045 / NBRC 100440</strain>
    </source>
</reference>
<reference key="2">
    <citation type="journal article" date="1996" name="Science">
        <title>Complete genome sequence of the methanogenic archaeon, Methanococcus jannaschii.</title>
        <authorList>
            <person name="Bult C.J."/>
            <person name="White O."/>
            <person name="Olsen G.J."/>
            <person name="Zhou L."/>
            <person name="Fleischmann R.D."/>
            <person name="Sutton G.G."/>
            <person name="Blake J.A."/>
            <person name="FitzGerald L.M."/>
            <person name="Clayton R.A."/>
            <person name="Gocayne J.D."/>
            <person name="Kerlavage A.R."/>
            <person name="Dougherty B.A."/>
            <person name="Tomb J.-F."/>
            <person name="Adams M.D."/>
            <person name="Reich C.I."/>
            <person name="Overbeek R."/>
            <person name="Kirkness E.F."/>
            <person name="Weinstock K.G."/>
            <person name="Merrick J.M."/>
            <person name="Glodek A."/>
            <person name="Scott J.L."/>
            <person name="Geoghagen N.S.M."/>
            <person name="Weidman J.F."/>
            <person name="Fuhrmann J.L."/>
            <person name="Nguyen D."/>
            <person name="Utterback T.R."/>
            <person name="Kelley J.M."/>
            <person name="Peterson J.D."/>
            <person name="Sadow P.W."/>
            <person name="Hanna M.C."/>
            <person name="Cotton M.D."/>
            <person name="Roberts K.M."/>
            <person name="Hurst M.A."/>
            <person name="Kaine B.P."/>
            <person name="Borodovsky M."/>
            <person name="Klenk H.-P."/>
            <person name="Fraser C.M."/>
            <person name="Smith H.O."/>
            <person name="Woese C.R."/>
            <person name="Venter J.C."/>
        </authorList>
    </citation>
    <scope>NUCLEOTIDE SEQUENCE [LARGE SCALE GENOMIC DNA]</scope>
    <source>
        <strain>ATCC 43067 / DSM 2661 / JAL-1 / JCM 10045 / NBRC 100440</strain>
    </source>
</reference>
<name>GLMM_METJA</name>
<sequence length="448" mass="50099">MGRLFGTSGIRMKNLSPKIAYKVGLAVAKKYKKVVVGRDTRTTGKLIETALTAGILNGGGEVTTINIVPTPVLGFNARNYDVGIMITASHNPPEYNGIKLFNKNGLAFNKKEEDEIEEIIFKEDFIEVEWHSVGEIWEDSRAIRNYMEHILKNVEINEKFNVVIDCANASACLVSPYLFTDLGCHVISVNSHMDGRFIGRLPEPDEKNLKKTMDMIKGLNMSGDNYIGIAHDGDADRMVAIDEKGRLADFDKLLAAFSRYMVEKTGNKKIVTTVDASMIIDEYLKDLDVEIIRTKVGDVAVAEEMIKNSAVFGGEPSGTWIHADIHLTPDGILSGLRVLEMLDFYNKKLYEILDEIPSYVNLREKIPCEDDKKEKVMSYVIENGESLFKTVPETVDGARFNLENGWVLIRPSGTEPYIRVRVEAKNNKDAKELLEKGIKLVKEALSAL</sequence>
<feature type="chain" id="PRO_0000148029" description="Phosphoglucosamine mutase">
    <location>
        <begin position="1"/>
        <end position="448"/>
    </location>
</feature>
<feature type="active site" description="Phosphoserine intermediate" evidence="1">
    <location>
        <position position="89"/>
    </location>
</feature>
<feature type="binding site" description="via phosphate group" evidence="1">
    <location>
        <position position="89"/>
    </location>
    <ligand>
        <name>Mg(2+)</name>
        <dbReference type="ChEBI" id="CHEBI:18420"/>
    </ligand>
</feature>
<feature type="binding site" evidence="1">
    <location>
        <position position="232"/>
    </location>
    <ligand>
        <name>Mg(2+)</name>
        <dbReference type="ChEBI" id="CHEBI:18420"/>
    </ligand>
</feature>
<feature type="binding site" evidence="1">
    <location>
        <position position="234"/>
    </location>
    <ligand>
        <name>Mg(2+)</name>
        <dbReference type="ChEBI" id="CHEBI:18420"/>
    </ligand>
</feature>
<feature type="binding site" evidence="1">
    <location>
        <position position="236"/>
    </location>
    <ligand>
        <name>Mg(2+)</name>
        <dbReference type="ChEBI" id="CHEBI:18420"/>
    </ligand>
</feature>
<feature type="modified residue" description="Phosphoserine" evidence="1">
    <location>
        <position position="89"/>
    </location>
</feature>
<feature type="sequence conflict" description="In Ref. 1; ABZ91903." evidence="3" ref="1">
    <original>L</original>
    <variation>I</variation>
    <location>
        <position position="209"/>
    </location>
</feature>
<comment type="function">
    <text evidence="1">Catalyzes the conversion of glucosamine-6-phosphate to glucosamine-1-phosphate.</text>
</comment>
<comment type="catalytic activity">
    <reaction>
        <text>alpha-D-glucosamine 1-phosphate = D-glucosamine 6-phosphate</text>
        <dbReference type="Rhea" id="RHEA:23424"/>
        <dbReference type="ChEBI" id="CHEBI:58516"/>
        <dbReference type="ChEBI" id="CHEBI:58725"/>
        <dbReference type="EC" id="5.4.2.10"/>
    </reaction>
</comment>
<comment type="cofactor">
    <cofactor evidence="1">
        <name>Mg(2+)</name>
        <dbReference type="ChEBI" id="CHEBI:18420"/>
    </cofactor>
    <text evidence="1">Binds 1 Mg(2+) ion per subunit.</text>
</comment>
<comment type="subunit">
    <text evidence="2">Forms large aggregates.</text>
</comment>
<comment type="PTM">
    <text evidence="1">Activated by phosphorylation.</text>
</comment>
<comment type="similarity">
    <text evidence="3">Belongs to the phosphohexose mutase family.</text>
</comment>